<evidence type="ECO:0000255" key="1">
    <source>
        <dbReference type="HAMAP-Rule" id="MF_01102"/>
    </source>
</evidence>
<evidence type="ECO:0000305" key="2"/>
<name>MNMC_METFK</name>
<accession>Q1H1H9</accession>
<protein>
    <recommendedName>
        <fullName evidence="1">tRNA 5-methylaminomethyl-2-thiouridine biosynthesis bifunctional protein MnmC</fullName>
        <shortName evidence="1">tRNA mnm(5)s(2)U biosynthesis bifunctional protein</shortName>
    </recommendedName>
    <domain>
        <recommendedName>
            <fullName evidence="1">tRNA (mnm(5)s(2)U34)-methyltransferase</fullName>
            <ecNumber evidence="1">2.1.1.61</ecNumber>
        </recommendedName>
    </domain>
    <domain>
        <recommendedName>
            <fullName evidence="1">FAD-dependent cmnm(5)s(2)U34 oxidoreductase</fullName>
            <ecNumber evidence="1">1.5.-.-</ecNumber>
        </recommendedName>
    </domain>
</protein>
<dbReference type="EC" id="2.1.1.61" evidence="1"/>
<dbReference type="EC" id="1.5.-.-" evidence="1"/>
<dbReference type="EMBL" id="CP000284">
    <property type="protein sequence ID" value="ABE49658.1"/>
    <property type="status" value="ALT_INIT"/>
    <property type="molecule type" value="Genomic_DNA"/>
</dbReference>
<dbReference type="RefSeq" id="WP_048811615.1">
    <property type="nucleotide sequence ID" value="NC_007947.1"/>
</dbReference>
<dbReference type="SMR" id="Q1H1H9"/>
<dbReference type="STRING" id="265072.Mfla_1390"/>
<dbReference type="KEGG" id="mfa:Mfla_1390"/>
<dbReference type="eggNOG" id="COG0665">
    <property type="taxonomic scope" value="Bacteria"/>
</dbReference>
<dbReference type="eggNOG" id="COG4121">
    <property type="taxonomic scope" value="Bacteria"/>
</dbReference>
<dbReference type="HOGENOM" id="CLU_022427_1_0_4"/>
<dbReference type="OrthoDB" id="9786494at2"/>
<dbReference type="Proteomes" id="UP000002440">
    <property type="component" value="Chromosome"/>
</dbReference>
<dbReference type="GO" id="GO:0005737">
    <property type="term" value="C:cytoplasm"/>
    <property type="evidence" value="ECO:0007669"/>
    <property type="project" value="UniProtKB-SubCell"/>
</dbReference>
<dbReference type="GO" id="GO:0050660">
    <property type="term" value="F:flavin adenine dinucleotide binding"/>
    <property type="evidence" value="ECO:0007669"/>
    <property type="project" value="UniProtKB-UniRule"/>
</dbReference>
<dbReference type="GO" id="GO:0016645">
    <property type="term" value="F:oxidoreductase activity, acting on the CH-NH group of donors"/>
    <property type="evidence" value="ECO:0007669"/>
    <property type="project" value="InterPro"/>
</dbReference>
<dbReference type="GO" id="GO:0004808">
    <property type="term" value="F:tRNA (5-methylaminomethyl-2-thiouridylate)(34)-methyltransferase activity"/>
    <property type="evidence" value="ECO:0007669"/>
    <property type="project" value="UniProtKB-EC"/>
</dbReference>
<dbReference type="GO" id="GO:0032259">
    <property type="term" value="P:methylation"/>
    <property type="evidence" value="ECO:0007669"/>
    <property type="project" value="UniProtKB-KW"/>
</dbReference>
<dbReference type="GO" id="GO:0002098">
    <property type="term" value="P:tRNA wobble uridine modification"/>
    <property type="evidence" value="ECO:0007669"/>
    <property type="project" value="TreeGrafter"/>
</dbReference>
<dbReference type="Gene3D" id="3.30.9.10">
    <property type="entry name" value="D-Amino Acid Oxidase, subunit A, domain 2"/>
    <property type="match status" value="1"/>
</dbReference>
<dbReference type="Gene3D" id="3.50.50.60">
    <property type="entry name" value="FAD/NAD(P)-binding domain"/>
    <property type="match status" value="1"/>
</dbReference>
<dbReference type="Gene3D" id="3.40.50.150">
    <property type="entry name" value="Vaccinia Virus protein VP39"/>
    <property type="match status" value="1"/>
</dbReference>
<dbReference type="HAMAP" id="MF_01102">
    <property type="entry name" value="MnmC"/>
    <property type="match status" value="1"/>
</dbReference>
<dbReference type="InterPro" id="IPR006076">
    <property type="entry name" value="FAD-dep_OxRdtase"/>
</dbReference>
<dbReference type="InterPro" id="IPR036188">
    <property type="entry name" value="FAD/NAD-bd_sf"/>
</dbReference>
<dbReference type="InterPro" id="IPR008471">
    <property type="entry name" value="MnmC-like_methylTransf"/>
</dbReference>
<dbReference type="InterPro" id="IPR029063">
    <property type="entry name" value="SAM-dependent_MTases_sf"/>
</dbReference>
<dbReference type="InterPro" id="IPR023032">
    <property type="entry name" value="tRNA_MAMT_biosynth_bifunc_MnmC"/>
</dbReference>
<dbReference type="InterPro" id="IPR047785">
    <property type="entry name" value="tRNA_MNMC2"/>
</dbReference>
<dbReference type="InterPro" id="IPR017610">
    <property type="entry name" value="tRNA_S-uridine_synth_MnmC_C"/>
</dbReference>
<dbReference type="NCBIfam" id="TIGR03197">
    <property type="entry name" value="MnmC_Cterm"/>
    <property type="match status" value="1"/>
</dbReference>
<dbReference type="NCBIfam" id="NF002481">
    <property type="entry name" value="PRK01747.1-2"/>
    <property type="match status" value="1"/>
</dbReference>
<dbReference type="NCBIfam" id="NF033855">
    <property type="entry name" value="tRNA_MNMC2"/>
    <property type="match status" value="1"/>
</dbReference>
<dbReference type="PANTHER" id="PTHR13847">
    <property type="entry name" value="SARCOSINE DEHYDROGENASE-RELATED"/>
    <property type="match status" value="1"/>
</dbReference>
<dbReference type="PANTHER" id="PTHR13847:SF283">
    <property type="entry name" value="TRNA 5-METHYLAMINOMETHYL-2-THIOURIDINE BIOSYNTHESIS BIFUNCTIONAL PROTEIN MNMC"/>
    <property type="match status" value="1"/>
</dbReference>
<dbReference type="Pfam" id="PF01266">
    <property type="entry name" value="DAO"/>
    <property type="match status" value="1"/>
</dbReference>
<dbReference type="Pfam" id="PF05430">
    <property type="entry name" value="Methyltransf_30"/>
    <property type="match status" value="1"/>
</dbReference>
<dbReference type="SUPFAM" id="SSF54373">
    <property type="entry name" value="FAD-linked reductases, C-terminal domain"/>
    <property type="match status" value="1"/>
</dbReference>
<dbReference type="SUPFAM" id="SSF51905">
    <property type="entry name" value="FAD/NAD(P)-binding domain"/>
    <property type="match status" value="1"/>
</dbReference>
<sequence length="647" mass="71144">MSIPPFSQASLEWHEGQPYSAHFGDVYFSRESGLEETRHVFLRHNQLAERWQTMQQDAFTIVETGFGTGLNFLCAWQMWEHTAPSHVRLHFVSIEKFPLSHADLARALALWPELRQYSTALLAQYHQIVPGWQRLVFCQGRVQLTLLVGDVLALLPQLSSHADAWFLDGFAPSRNPEMWQEALFDNMAAFSHKHTTFATFTSAGIVKRGLQAAGFEVHKVAGHGRKRDMLCGRFTLNERPAMRAGRAVVIGGGIAGTASSHMLAERGWQVNLVEQEPALAQHASGNPVGVLYPKLARKDVPLGRLSLAGYLHSLRLLQQLGLDATAHARCGMLQLAFDQRELERCQTIAAQGFPPELLHWVDQEQAGNIAGIALQYGALYFPEAGWVRPRAYCEALAGHANITRTLATRVTGLSQHGNAWQVWTGEQLLDEADIVVIANAAQAASFVQSRHLPLEQVRGQISRLHHVDGAPVLHALLCTDGYISPLIDGAYCLGATFVPGDTTTSVRDEEHAQNLDMLKHMAPSLYDTLMPQAPTGRAAVRCTSVDYLPLVGPVLDAALLEARPPRYTADPASSLPWLPGLYVNTGHGSKGLTTAPIAAEMLACAIHHEPAPVDSELLAVLDPNRFVLRKLGLKRLVRGLACHPLRR</sequence>
<proteinExistence type="inferred from homology"/>
<keyword id="KW-0963">Cytoplasm</keyword>
<keyword id="KW-0274">FAD</keyword>
<keyword id="KW-0285">Flavoprotein</keyword>
<keyword id="KW-0489">Methyltransferase</keyword>
<keyword id="KW-0511">Multifunctional enzyme</keyword>
<keyword id="KW-0560">Oxidoreductase</keyword>
<keyword id="KW-1185">Reference proteome</keyword>
<keyword id="KW-0949">S-adenosyl-L-methionine</keyword>
<keyword id="KW-0808">Transferase</keyword>
<keyword id="KW-0819">tRNA processing</keyword>
<organism>
    <name type="scientific">Methylobacillus flagellatus (strain ATCC 51484 / DSM 6875 / VKM B-1610 / KT)</name>
    <dbReference type="NCBI Taxonomy" id="265072"/>
    <lineage>
        <taxon>Bacteria</taxon>
        <taxon>Pseudomonadati</taxon>
        <taxon>Pseudomonadota</taxon>
        <taxon>Betaproteobacteria</taxon>
        <taxon>Nitrosomonadales</taxon>
        <taxon>Methylophilaceae</taxon>
        <taxon>Methylobacillus</taxon>
    </lineage>
</organism>
<comment type="function">
    <text evidence="1">Catalyzes the last two steps in the biosynthesis of 5-methylaminomethyl-2-thiouridine (mnm(5)s(2)U) at the wobble position (U34) in tRNA. Catalyzes the FAD-dependent demodification of cmnm(5)s(2)U34 to nm(5)s(2)U34, followed by the transfer of a methyl group from S-adenosyl-L-methionine to nm(5)s(2)U34, to form mnm(5)s(2)U34.</text>
</comment>
<comment type="catalytic activity">
    <reaction evidence="1">
        <text>5-aminomethyl-2-thiouridine(34) in tRNA + S-adenosyl-L-methionine = 5-methylaminomethyl-2-thiouridine(34) in tRNA + S-adenosyl-L-homocysteine + H(+)</text>
        <dbReference type="Rhea" id="RHEA:19569"/>
        <dbReference type="Rhea" id="RHEA-COMP:10195"/>
        <dbReference type="Rhea" id="RHEA-COMP:10197"/>
        <dbReference type="ChEBI" id="CHEBI:15378"/>
        <dbReference type="ChEBI" id="CHEBI:57856"/>
        <dbReference type="ChEBI" id="CHEBI:59789"/>
        <dbReference type="ChEBI" id="CHEBI:74454"/>
        <dbReference type="ChEBI" id="CHEBI:74455"/>
        <dbReference type="EC" id="2.1.1.61"/>
    </reaction>
</comment>
<comment type="cofactor">
    <cofactor evidence="1">
        <name>FAD</name>
        <dbReference type="ChEBI" id="CHEBI:57692"/>
    </cofactor>
</comment>
<comment type="subcellular location">
    <subcellularLocation>
        <location evidence="1">Cytoplasm</location>
    </subcellularLocation>
</comment>
<comment type="similarity">
    <text evidence="1">In the N-terminal section; belongs to the methyltransferase superfamily. tRNA (mnm(5)s(2)U34)-methyltransferase family.</text>
</comment>
<comment type="similarity">
    <text evidence="1">In the C-terminal section; belongs to the DAO family.</text>
</comment>
<comment type="sequence caution" evidence="2">
    <conflict type="erroneous initiation">
        <sequence resource="EMBL-CDS" id="ABE49658"/>
    </conflict>
</comment>
<feature type="chain" id="PRO_0000348004" description="tRNA 5-methylaminomethyl-2-thiouridine biosynthesis bifunctional protein MnmC">
    <location>
        <begin position="1"/>
        <end position="647"/>
    </location>
</feature>
<feature type="region of interest" description="tRNA (mnm(5)s(2)U34)-methyltransferase">
    <location>
        <begin position="1"/>
        <end position="235"/>
    </location>
</feature>
<feature type="region of interest" description="FAD-dependent cmnm(5)s(2)U34 oxidoreductase">
    <location>
        <begin position="250"/>
        <end position="647"/>
    </location>
</feature>
<gene>
    <name evidence="1" type="primary">mnmC</name>
    <name type="ordered locus">Mfla_1390</name>
</gene>
<reference key="1">
    <citation type="submission" date="2006-03" db="EMBL/GenBank/DDBJ databases">
        <title>Complete sequence of Methylobacillus flagellatus KT.</title>
        <authorList>
            <consortium name="US DOE Joint Genome Institute"/>
            <person name="Copeland A."/>
            <person name="Lucas S."/>
            <person name="Lapidus A."/>
            <person name="Barry K."/>
            <person name="Detter J.C."/>
            <person name="Glavina del Rio T."/>
            <person name="Hammon N."/>
            <person name="Israni S."/>
            <person name="Dalin E."/>
            <person name="Tice H."/>
            <person name="Pitluck S."/>
            <person name="Brettin T."/>
            <person name="Bruce D."/>
            <person name="Han C."/>
            <person name="Tapia R."/>
            <person name="Saunders E."/>
            <person name="Gilna P."/>
            <person name="Schmutz J."/>
            <person name="Larimer F."/>
            <person name="Land M."/>
            <person name="Kyrpides N."/>
            <person name="Anderson I."/>
            <person name="Richardson P."/>
        </authorList>
    </citation>
    <scope>NUCLEOTIDE SEQUENCE [LARGE SCALE GENOMIC DNA]</scope>
    <source>
        <strain>ATCC 51484 / DSM 6875 / VKM B-1610 / KT</strain>
    </source>
</reference>